<proteinExistence type="inferred from homology"/>
<sequence>MSNPQQLRYSKEHEWLSGAEDGVSTVGITEHAANALGDVVFVQLPEVGDSVTAGETCGELESTKSVSDLYSPVSGEITEVNEDVVNDPSLVNSAPFEGGWLFKVRITDEPADLLSADEYTAFAGA</sequence>
<evidence type="ECO:0000255" key="1">
    <source>
        <dbReference type="HAMAP-Rule" id="MF_00272"/>
    </source>
</evidence>
<evidence type="ECO:0000255" key="2">
    <source>
        <dbReference type="PROSITE-ProRule" id="PRU01066"/>
    </source>
</evidence>
<gene>
    <name evidence="1" type="primary">gcvH</name>
    <name type="ordered locus">SCO5471</name>
    <name type="ORF">SC2A11.05c</name>
</gene>
<feature type="chain" id="PRO_0000166255" description="Glycine cleavage system H protein">
    <location>
        <begin position="1"/>
        <end position="125"/>
    </location>
</feature>
<feature type="domain" description="Lipoyl-binding" evidence="2">
    <location>
        <begin position="23"/>
        <end position="105"/>
    </location>
</feature>
<feature type="modified residue" description="N6-lipoyllysine" evidence="1">
    <location>
        <position position="64"/>
    </location>
</feature>
<organism>
    <name type="scientific">Streptomyces coelicolor (strain ATCC BAA-471 / A3(2) / M145)</name>
    <dbReference type="NCBI Taxonomy" id="100226"/>
    <lineage>
        <taxon>Bacteria</taxon>
        <taxon>Bacillati</taxon>
        <taxon>Actinomycetota</taxon>
        <taxon>Actinomycetes</taxon>
        <taxon>Kitasatosporales</taxon>
        <taxon>Streptomycetaceae</taxon>
        <taxon>Streptomyces</taxon>
        <taxon>Streptomyces albidoflavus group</taxon>
    </lineage>
</organism>
<accession>O86566</accession>
<comment type="function">
    <text evidence="1">The glycine cleavage system catalyzes the degradation of glycine. The H protein shuttles the methylamine group of glycine from the P protein to the T protein.</text>
</comment>
<comment type="cofactor">
    <cofactor evidence="1">
        <name>(R)-lipoate</name>
        <dbReference type="ChEBI" id="CHEBI:83088"/>
    </cofactor>
    <text evidence="1">Binds 1 lipoyl cofactor covalently.</text>
</comment>
<comment type="subunit">
    <text evidence="1">The glycine cleavage system is composed of four proteins: P, T, L and H.</text>
</comment>
<comment type="similarity">
    <text evidence="1">Belongs to the GcvH family.</text>
</comment>
<name>GCSH_STRCO</name>
<keyword id="KW-0450">Lipoyl</keyword>
<keyword id="KW-1185">Reference proteome</keyword>
<protein>
    <recommendedName>
        <fullName evidence="1">Glycine cleavage system H protein</fullName>
    </recommendedName>
</protein>
<dbReference type="EMBL" id="AL939123">
    <property type="protein sequence ID" value="CAA20174.1"/>
    <property type="molecule type" value="Genomic_DNA"/>
</dbReference>
<dbReference type="PIR" id="T34751">
    <property type="entry name" value="T34751"/>
</dbReference>
<dbReference type="RefSeq" id="NP_629607.1">
    <property type="nucleotide sequence ID" value="NC_003888.3"/>
</dbReference>
<dbReference type="RefSeq" id="WP_003973527.1">
    <property type="nucleotide sequence ID" value="NZ_VNID01000011.1"/>
</dbReference>
<dbReference type="SMR" id="O86566"/>
<dbReference type="FunCoup" id="O86566">
    <property type="interactions" value="445"/>
</dbReference>
<dbReference type="STRING" id="100226.gene:17763123"/>
<dbReference type="PaxDb" id="100226-SCO5471"/>
<dbReference type="GeneID" id="91383562"/>
<dbReference type="KEGG" id="sco:SCO5471"/>
<dbReference type="PATRIC" id="fig|100226.15.peg.5555"/>
<dbReference type="eggNOG" id="COG0509">
    <property type="taxonomic scope" value="Bacteria"/>
</dbReference>
<dbReference type="HOGENOM" id="CLU_097408_2_2_11"/>
<dbReference type="InParanoid" id="O86566"/>
<dbReference type="OrthoDB" id="9796712at2"/>
<dbReference type="PhylomeDB" id="O86566"/>
<dbReference type="Proteomes" id="UP000001973">
    <property type="component" value="Chromosome"/>
</dbReference>
<dbReference type="GO" id="GO:0005829">
    <property type="term" value="C:cytosol"/>
    <property type="evidence" value="ECO:0000318"/>
    <property type="project" value="GO_Central"/>
</dbReference>
<dbReference type="GO" id="GO:0005960">
    <property type="term" value="C:glycine cleavage complex"/>
    <property type="evidence" value="ECO:0007669"/>
    <property type="project" value="InterPro"/>
</dbReference>
<dbReference type="GO" id="GO:0019464">
    <property type="term" value="P:glycine decarboxylation via glycine cleavage system"/>
    <property type="evidence" value="ECO:0007669"/>
    <property type="project" value="UniProtKB-UniRule"/>
</dbReference>
<dbReference type="CDD" id="cd06848">
    <property type="entry name" value="GCS_H"/>
    <property type="match status" value="1"/>
</dbReference>
<dbReference type="Gene3D" id="2.40.50.100">
    <property type="match status" value="1"/>
</dbReference>
<dbReference type="HAMAP" id="MF_00272">
    <property type="entry name" value="GcvH"/>
    <property type="match status" value="1"/>
</dbReference>
<dbReference type="InterPro" id="IPR003016">
    <property type="entry name" value="2-oxoA_DH_lipoyl-BS"/>
</dbReference>
<dbReference type="InterPro" id="IPR000089">
    <property type="entry name" value="Biotin_lipoyl"/>
</dbReference>
<dbReference type="InterPro" id="IPR002930">
    <property type="entry name" value="GCV_H"/>
</dbReference>
<dbReference type="InterPro" id="IPR033753">
    <property type="entry name" value="GCV_H/Fam206"/>
</dbReference>
<dbReference type="InterPro" id="IPR017453">
    <property type="entry name" value="GCV_H_sub"/>
</dbReference>
<dbReference type="InterPro" id="IPR011053">
    <property type="entry name" value="Single_hybrid_motif"/>
</dbReference>
<dbReference type="NCBIfam" id="TIGR00527">
    <property type="entry name" value="gcvH"/>
    <property type="match status" value="1"/>
</dbReference>
<dbReference type="NCBIfam" id="NF002270">
    <property type="entry name" value="PRK01202.1"/>
    <property type="match status" value="1"/>
</dbReference>
<dbReference type="PANTHER" id="PTHR11715">
    <property type="entry name" value="GLYCINE CLEAVAGE SYSTEM H PROTEIN"/>
    <property type="match status" value="1"/>
</dbReference>
<dbReference type="PANTHER" id="PTHR11715:SF3">
    <property type="entry name" value="GLYCINE CLEAVAGE SYSTEM H PROTEIN-RELATED"/>
    <property type="match status" value="1"/>
</dbReference>
<dbReference type="Pfam" id="PF01597">
    <property type="entry name" value="GCV_H"/>
    <property type="match status" value="1"/>
</dbReference>
<dbReference type="SUPFAM" id="SSF51230">
    <property type="entry name" value="Single hybrid motif"/>
    <property type="match status" value="1"/>
</dbReference>
<dbReference type="PROSITE" id="PS50968">
    <property type="entry name" value="BIOTINYL_LIPOYL"/>
    <property type="match status" value="1"/>
</dbReference>
<dbReference type="PROSITE" id="PS00189">
    <property type="entry name" value="LIPOYL"/>
    <property type="match status" value="1"/>
</dbReference>
<reference key="1">
    <citation type="journal article" date="2002" name="Nature">
        <title>Complete genome sequence of the model actinomycete Streptomyces coelicolor A3(2).</title>
        <authorList>
            <person name="Bentley S.D."/>
            <person name="Chater K.F."/>
            <person name="Cerdeno-Tarraga A.-M."/>
            <person name="Challis G.L."/>
            <person name="Thomson N.R."/>
            <person name="James K.D."/>
            <person name="Harris D.E."/>
            <person name="Quail M.A."/>
            <person name="Kieser H."/>
            <person name="Harper D."/>
            <person name="Bateman A."/>
            <person name="Brown S."/>
            <person name="Chandra G."/>
            <person name="Chen C.W."/>
            <person name="Collins M."/>
            <person name="Cronin A."/>
            <person name="Fraser A."/>
            <person name="Goble A."/>
            <person name="Hidalgo J."/>
            <person name="Hornsby T."/>
            <person name="Howarth S."/>
            <person name="Huang C.-H."/>
            <person name="Kieser T."/>
            <person name="Larke L."/>
            <person name="Murphy L.D."/>
            <person name="Oliver K."/>
            <person name="O'Neil S."/>
            <person name="Rabbinowitsch E."/>
            <person name="Rajandream M.A."/>
            <person name="Rutherford K.M."/>
            <person name="Rutter S."/>
            <person name="Seeger K."/>
            <person name="Saunders D."/>
            <person name="Sharp S."/>
            <person name="Squares R."/>
            <person name="Squares S."/>
            <person name="Taylor K."/>
            <person name="Warren T."/>
            <person name="Wietzorrek A."/>
            <person name="Woodward J.R."/>
            <person name="Barrell B.G."/>
            <person name="Parkhill J."/>
            <person name="Hopwood D.A."/>
        </authorList>
    </citation>
    <scope>NUCLEOTIDE SEQUENCE [LARGE SCALE GENOMIC DNA]</scope>
    <source>
        <strain>ATCC BAA-471 / A3(2) / M145</strain>
    </source>
</reference>